<comment type="function">
    <text evidence="1">Involved in the gluconeogenesis. Catalyzes stereospecifically the conversion of dihydroxyacetone phosphate (DHAP) to D-glyceraldehyde-3-phosphate (G3P).</text>
</comment>
<comment type="catalytic activity">
    <reaction evidence="1">
        <text>D-glyceraldehyde 3-phosphate = dihydroxyacetone phosphate</text>
        <dbReference type="Rhea" id="RHEA:18585"/>
        <dbReference type="ChEBI" id="CHEBI:57642"/>
        <dbReference type="ChEBI" id="CHEBI:59776"/>
        <dbReference type="EC" id="5.3.1.1"/>
    </reaction>
</comment>
<comment type="pathway">
    <text evidence="1">Carbohydrate biosynthesis; gluconeogenesis.</text>
</comment>
<comment type="pathway">
    <text evidence="1">Carbohydrate degradation; glycolysis; D-glyceraldehyde 3-phosphate from glycerone phosphate: step 1/1.</text>
</comment>
<comment type="subunit">
    <text evidence="1">Homodimer.</text>
</comment>
<comment type="subcellular location">
    <subcellularLocation>
        <location evidence="1">Cytoplasm</location>
    </subcellularLocation>
</comment>
<comment type="similarity">
    <text evidence="1">Belongs to the triosephosphate isomerase family.</text>
</comment>
<sequence>MRQKLVIGNWKMHGSLAANAALLEGIQAGAGVARATLAVCAPFPYLAQCQALLNGSKVAWGAQDVSAEARGAFTGEVAASMLGEFGCTYVLVGHSERRTYHGETDQAVAAKALRALEFGIVPVVCVGETLAQREAGETEAVVGRQLQAVLEALTVEQLGRVVLAYEPVWAIGTGKTATSEQAQAVHAFLRGQVAARDAGVAGRMAILYGGSVKPDNAAELFSMTDIDGGLIGGASLKSEDFLAIGNA</sequence>
<name>TPIS_CUPTR</name>
<feature type="chain" id="PRO_1000096491" description="Triosephosphate isomerase">
    <location>
        <begin position="1"/>
        <end position="247"/>
    </location>
</feature>
<feature type="active site" description="Electrophile" evidence="1">
    <location>
        <position position="94"/>
    </location>
</feature>
<feature type="active site" description="Proton acceptor" evidence="1">
    <location>
        <position position="166"/>
    </location>
</feature>
<feature type="binding site" evidence="1">
    <location>
        <begin position="9"/>
        <end position="11"/>
    </location>
    <ligand>
        <name>substrate</name>
    </ligand>
</feature>
<feature type="binding site" evidence="1">
    <location>
        <position position="172"/>
    </location>
    <ligand>
        <name>substrate</name>
    </ligand>
</feature>
<feature type="binding site" evidence="1">
    <location>
        <position position="211"/>
    </location>
    <ligand>
        <name>substrate</name>
    </ligand>
</feature>
<feature type="binding site" evidence="1">
    <location>
        <begin position="232"/>
        <end position="233"/>
    </location>
    <ligand>
        <name>substrate</name>
    </ligand>
</feature>
<evidence type="ECO:0000255" key="1">
    <source>
        <dbReference type="HAMAP-Rule" id="MF_00147"/>
    </source>
</evidence>
<organism>
    <name type="scientific">Cupriavidus taiwanensis (strain DSM 17343 / BCRC 17206 / CCUG 44338 / CIP 107171 / LMG 19424 / R1)</name>
    <name type="common">Ralstonia taiwanensis (strain LMG 19424)</name>
    <dbReference type="NCBI Taxonomy" id="977880"/>
    <lineage>
        <taxon>Bacteria</taxon>
        <taxon>Pseudomonadati</taxon>
        <taxon>Pseudomonadota</taxon>
        <taxon>Betaproteobacteria</taxon>
        <taxon>Burkholderiales</taxon>
        <taxon>Burkholderiaceae</taxon>
        <taxon>Cupriavidus</taxon>
    </lineage>
</organism>
<proteinExistence type="inferred from homology"/>
<gene>
    <name evidence="1" type="primary">tpiA</name>
    <name type="ordered locus">RALTA_A1032</name>
</gene>
<keyword id="KW-0963">Cytoplasm</keyword>
<keyword id="KW-0312">Gluconeogenesis</keyword>
<keyword id="KW-0324">Glycolysis</keyword>
<keyword id="KW-0413">Isomerase</keyword>
<accession>B3R3W5</accession>
<protein>
    <recommendedName>
        <fullName evidence="1">Triosephosphate isomerase</fullName>
        <shortName evidence="1">TIM</shortName>
        <shortName evidence="1">TPI</shortName>
        <ecNumber evidence="1">5.3.1.1</ecNumber>
    </recommendedName>
    <alternativeName>
        <fullName evidence="1">Triose-phosphate isomerase</fullName>
    </alternativeName>
</protein>
<reference key="1">
    <citation type="journal article" date="2008" name="Genome Res.">
        <title>Genome sequence of the beta-rhizobium Cupriavidus taiwanensis and comparative genomics of rhizobia.</title>
        <authorList>
            <person name="Amadou C."/>
            <person name="Pascal G."/>
            <person name="Mangenot S."/>
            <person name="Glew M."/>
            <person name="Bontemps C."/>
            <person name="Capela D."/>
            <person name="Carrere S."/>
            <person name="Cruveiller S."/>
            <person name="Dossat C."/>
            <person name="Lajus A."/>
            <person name="Marchetti M."/>
            <person name="Poinsot V."/>
            <person name="Rouy Z."/>
            <person name="Servin B."/>
            <person name="Saad M."/>
            <person name="Schenowitz C."/>
            <person name="Barbe V."/>
            <person name="Batut J."/>
            <person name="Medigue C."/>
            <person name="Masson-Boivin C."/>
        </authorList>
    </citation>
    <scope>NUCLEOTIDE SEQUENCE [LARGE SCALE GENOMIC DNA]</scope>
    <source>
        <strain>DSM 17343 / BCRC 17206 / CCUG 44338 / CIP 107171 / LMG 19424 / R1</strain>
    </source>
</reference>
<dbReference type="EC" id="5.3.1.1" evidence="1"/>
<dbReference type="EMBL" id="CU633749">
    <property type="protein sequence ID" value="CAQ68997.1"/>
    <property type="molecule type" value="Genomic_DNA"/>
</dbReference>
<dbReference type="RefSeq" id="WP_012352328.1">
    <property type="nucleotide sequence ID" value="NC_010528.1"/>
</dbReference>
<dbReference type="SMR" id="B3R3W5"/>
<dbReference type="GeneID" id="29762972"/>
<dbReference type="KEGG" id="cti:RALTA_A1032"/>
<dbReference type="eggNOG" id="COG0149">
    <property type="taxonomic scope" value="Bacteria"/>
</dbReference>
<dbReference type="HOGENOM" id="CLU_024251_2_3_4"/>
<dbReference type="BioCyc" id="CTAI977880:RALTA_RS04900-MONOMER"/>
<dbReference type="UniPathway" id="UPA00109">
    <property type="reaction ID" value="UER00189"/>
</dbReference>
<dbReference type="UniPathway" id="UPA00138"/>
<dbReference type="Proteomes" id="UP000001692">
    <property type="component" value="Chromosome 1"/>
</dbReference>
<dbReference type="GO" id="GO:0005829">
    <property type="term" value="C:cytosol"/>
    <property type="evidence" value="ECO:0007669"/>
    <property type="project" value="TreeGrafter"/>
</dbReference>
<dbReference type="GO" id="GO:0004807">
    <property type="term" value="F:triose-phosphate isomerase activity"/>
    <property type="evidence" value="ECO:0007669"/>
    <property type="project" value="UniProtKB-UniRule"/>
</dbReference>
<dbReference type="GO" id="GO:0006094">
    <property type="term" value="P:gluconeogenesis"/>
    <property type="evidence" value="ECO:0007669"/>
    <property type="project" value="UniProtKB-UniRule"/>
</dbReference>
<dbReference type="GO" id="GO:0046166">
    <property type="term" value="P:glyceraldehyde-3-phosphate biosynthetic process"/>
    <property type="evidence" value="ECO:0007669"/>
    <property type="project" value="TreeGrafter"/>
</dbReference>
<dbReference type="GO" id="GO:0019563">
    <property type="term" value="P:glycerol catabolic process"/>
    <property type="evidence" value="ECO:0007669"/>
    <property type="project" value="TreeGrafter"/>
</dbReference>
<dbReference type="GO" id="GO:0006096">
    <property type="term" value="P:glycolytic process"/>
    <property type="evidence" value="ECO:0007669"/>
    <property type="project" value="UniProtKB-UniRule"/>
</dbReference>
<dbReference type="CDD" id="cd00311">
    <property type="entry name" value="TIM"/>
    <property type="match status" value="1"/>
</dbReference>
<dbReference type="FunFam" id="3.20.20.70:FF:000016">
    <property type="entry name" value="Triosephosphate isomerase"/>
    <property type="match status" value="1"/>
</dbReference>
<dbReference type="Gene3D" id="3.20.20.70">
    <property type="entry name" value="Aldolase class I"/>
    <property type="match status" value="1"/>
</dbReference>
<dbReference type="HAMAP" id="MF_00147_B">
    <property type="entry name" value="TIM_B"/>
    <property type="match status" value="1"/>
</dbReference>
<dbReference type="InterPro" id="IPR013785">
    <property type="entry name" value="Aldolase_TIM"/>
</dbReference>
<dbReference type="InterPro" id="IPR035990">
    <property type="entry name" value="TIM_sf"/>
</dbReference>
<dbReference type="InterPro" id="IPR022896">
    <property type="entry name" value="TrioseP_Isoase_bac/euk"/>
</dbReference>
<dbReference type="InterPro" id="IPR000652">
    <property type="entry name" value="Triosephosphate_isomerase"/>
</dbReference>
<dbReference type="InterPro" id="IPR020861">
    <property type="entry name" value="Triosephosphate_isomerase_AS"/>
</dbReference>
<dbReference type="NCBIfam" id="TIGR00419">
    <property type="entry name" value="tim"/>
    <property type="match status" value="1"/>
</dbReference>
<dbReference type="PANTHER" id="PTHR21139">
    <property type="entry name" value="TRIOSEPHOSPHATE ISOMERASE"/>
    <property type="match status" value="1"/>
</dbReference>
<dbReference type="PANTHER" id="PTHR21139:SF42">
    <property type="entry name" value="TRIOSEPHOSPHATE ISOMERASE"/>
    <property type="match status" value="1"/>
</dbReference>
<dbReference type="Pfam" id="PF00121">
    <property type="entry name" value="TIM"/>
    <property type="match status" value="1"/>
</dbReference>
<dbReference type="SUPFAM" id="SSF51351">
    <property type="entry name" value="Triosephosphate isomerase (TIM)"/>
    <property type="match status" value="1"/>
</dbReference>
<dbReference type="PROSITE" id="PS00171">
    <property type="entry name" value="TIM_1"/>
    <property type="match status" value="1"/>
</dbReference>
<dbReference type="PROSITE" id="PS51440">
    <property type="entry name" value="TIM_2"/>
    <property type="match status" value="1"/>
</dbReference>